<gene>
    <name evidence="3" type="primary">SPH31</name>
    <name evidence="6" type="ordered locus">At3g27680</name>
    <name evidence="7" type="ORF">MGF10.9</name>
</gene>
<proteinExistence type="inferred from homology"/>
<name>SPH31_ARATH</name>
<keyword id="KW-0325">Glycoprotein</keyword>
<keyword id="KW-1185">Reference proteome</keyword>
<keyword id="KW-0964">Secreted</keyword>
<keyword id="KW-0713">Self-incompatibility</keyword>
<keyword id="KW-0732">Signal</keyword>
<reference key="1">
    <citation type="journal article" date="2000" name="DNA Res.">
        <title>Structural analysis of Arabidopsis thaliana chromosome 3. I. Sequence features of the regions of 4,504,864 bp covered by sixty P1 and TAC clones.</title>
        <authorList>
            <person name="Sato S."/>
            <person name="Nakamura Y."/>
            <person name="Kaneko T."/>
            <person name="Katoh T."/>
            <person name="Asamizu E."/>
            <person name="Tabata S."/>
        </authorList>
    </citation>
    <scope>NUCLEOTIDE SEQUENCE [LARGE SCALE GENOMIC DNA]</scope>
    <source>
        <strain>cv. Columbia</strain>
    </source>
</reference>
<reference key="2">
    <citation type="journal article" date="2017" name="Plant J.">
        <title>Araport11: a complete reannotation of the Arabidopsis thaliana reference genome.</title>
        <authorList>
            <person name="Cheng C.Y."/>
            <person name="Krishnakumar V."/>
            <person name="Chan A.P."/>
            <person name="Thibaud-Nissen F."/>
            <person name="Schobel S."/>
            <person name="Town C.D."/>
        </authorList>
    </citation>
    <scope>GENOME REANNOTATION</scope>
    <source>
        <strain>cv. Columbia</strain>
    </source>
</reference>
<reference key="3">
    <citation type="journal article" date="1999" name="Plant Mol. Biol.">
        <title>Analysis of Arabidopsis genome sequence reveals a large new gene family in plants.</title>
        <authorList>
            <person name="Ride J.P."/>
            <person name="Davies E.M."/>
            <person name="Franklin F.C.H."/>
            <person name="Marshall D.F."/>
        </authorList>
    </citation>
    <scope>GENE FAMILY</scope>
    <scope>NOMENCLATURE</scope>
    <source>
        <strain>cv. Columbia</strain>
    </source>
</reference>
<protein>
    <recommendedName>
        <fullName evidence="3">S-protein homolog 31</fullName>
    </recommendedName>
</protein>
<sequence length="134" mass="15884">MKILSVFLFVFSIYIFGHVSGTGIRIVNELKSHKNLWMRCYSKNDVIGPKIIPVGYDYVNSFRANIWGTTRFMCTLKQRPNYRHYQNFTAFKQYTAYDNGADWDWRAREDGIYLKKEGGLKKSVDMNKVYDWIN</sequence>
<organism>
    <name type="scientific">Arabidopsis thaliana</name>
    <name type="common">Mouse-ear cress</name>
    <dbReference type="NCBI Taxonomy" id="3702"/>
    <lineage>
        <taxon>Eukaryota</taxon>
        <taxon>Viridiplantae</taxon>
        <taxon>Streptophyta</taxon>
        <taxon>Embryophyta</taxon>
        <taxon>Tracheophyta</taxon>
        <taxon>Spermatophyta</taxon>
        <taxon>Magnoliopsida</taxon>
        <taxon>eudicotyledons</taxon>
        <taxon>Gunneridae</taxon>
        <taxon>Pentapetalae</taxon>
        <taxon>rosids</taxon>
        <taxon>malvids</taxon>
        <taxon>Brassicales</taxon>
        <taxon>Brassicaceae</taxon>
        <taxon>Camelineae</taxon>
        <taxon>Arabidopsis</taxon>
    </lineage>
</organism>
<accession>Q9LVX2</accession>
<dbReference type="EMBL" id="AB018114">
    <property type="protein sequence ID" value="BAB02692.1"/>
    <property type="molecule type" value="Genomic_DNA"/>
</dbReference>
<dbReference type="EMBL" id="CP002686">
    <property type="protein sequence ID" value="AEE77351.1"/>
    <property type="molecule type" value="Genomic_DNA"/>
</dbReference>
<dbReference type="RefSeq" id="NP_189405.1">
    <property type="nucleotide sequence ID" value="NM_113684.1"/>
</dbReference>
<dbReference type="SMR" id="Q9LVX2"/>
<dbReference type="GlyCosmos" id="Q9LVX2">
    <property type="glycosylation" value="1 site, No reported glycans"/>
</dbReference>
<dbReference type="GlyGen" id="Q9LVX2">
    <property type="glycosylation" value="1 site"/>
</dbReference>
<dbReference type="PaxDb" id="3702-AT3G27680.1"/>
<dbReference type="EnsemblPlants" id="AT3G27680.1">
    <property type="protein sequence ID" value="AT3G27680.1"/>
    <property type="gene ID" value="AT3G27680"/>
</dbReference>
<dbReference type="GeneID" id="822390"/>
<dbReference type="Gramene" id="AT3G27680.1">
    <property type="protein sequence ID" value="AT3G27680.1"/>
    <property type="gene ID" value="AT3G27680"/>
</dbReference>
<dbReference type="KEGG" id="ath:AT3G27680"/>
<dbReference type="Araport" id="AT3G27680"/>
<dbReference type="TAIR" id="AT3G27680"/>
<dbReference type="HOGENOM" id="CLU_125658_3_2_1"/>
<dbReference type="InParanoid" id="Q9LVX2"/>
<dbReference type="OMA" id="DWDWRAR"/>
<dbReference type="PhylomeDB" id="Q9LVX2"/>
<dbReference type="PRO" id="PR:Q9LVX2"/>
<dbReference type="Proteomes" id="UP000006548">
    <property type="component" value="Chromosome 3"/>
</dbReference>
<dbReference type="ExpressionAtlas" id="Q9LVX2">
    <property type="expression patterns" value="baseline and differential"/>
</dbReference>
<dbReference type="GO" id="GO:0005576">
    <property type="term" value="C:extracellular region"/>
    <property type="evidence" value="ECO:0007669"/>
    <property type="project" value="UniProtKB-SubCell"/>
</dbReference>
<dbReference type="GO" id="GO:0060320">
    <property type="term" value="P:rejection of self pollen"/>
    <property type="evidence" value="ECO:0007669"/>
    <property type="project" value="UniProtKB-KW"/>
</dbReference>
<dbReference type="InterPro" id="IPR010264">
    <property type="entry name" value="Self-incomp_S1"/>
</dbReference>
<dbReference type="PANTHER" id="PTHR31232">
    <property type="match status" value="1"/>
</dbReference>
<dbReference type="PANTHER" id="PTHR31232:SF54">
    <property type="entry name" value="S-PROTEIN HOMOLOG-RELATED"/>
    <property type="match status" value="1"/>
</dbReference>
<dbReference type="Pfam" id="PF05938">
    <property type="entry name" value="Self-incomp_S1"/>
    <property type="match status" value="1"/>
</dbReference>
<feature type="signal peptide" evidence="1">
    <location>
        <begin position="1"/>
        <end position="21"/>
    </location>
</feature>
<feature type="chain" id="PRO_5009348639" description="S-protein homolog 31">
    <location>
        <begin position="22"/>
        <end position="134"/>
    </location>
</feature>
<feature type="glycosylation site" description="N-linked (GlcNAc...) asparagine" evidence="2">
    <location>
        <position position="87"/>
    </location>
</feature>
<comment type="subcellular location">
    <subcellularLocation>
        <location evidence="5">Secreted</location>
    </subcellularLocation>
</comment>
<comment type="similarity">
    <text evidence="4">Belongs to the plant self-incompatibility (S1) protein family.</text>
</comment>
<evidence type="ECO:0000255" key="1"/>
<evidence type="ECO:0000255" key="2">
    <source>
        <dbReference type="PROSITE-ProRule" id="PRU00498"/>
    </source>
</evidence>
<evidence type="ECO:0000303" key="3">
    <source>
    </source>
</evidence>
<evidence type="ECO:0000305" key="4"/>
<evidence type="ECO:0000305" key="5">
    <source>
    </source>
</evidence>
<evidence type="ECO:0000312" key="6">
    <source>
        <dbReference type="Araport" id="AT3G27680"/>
    </source>
</evidence>
<evidence type="ECO:0000312" key="7">
    <source>
        <dbReference type="EMBL" id="BAB02692.1"/>
    </source>
</evidence>